<gene>
    <name evidence="1" type="primary">ndhB2</name>
</gene>
<protein>
    <recommendedName>
        <fullName evidence="1">NAD(P)H-quinone oxidoreductase subunit 2 B, chloroplastic</fullName>
        <ecNumber evidence="1">7.1.1.-</ecNumber>
    </recommendedName>
    <alternativeName>
        <fullName evidence="1">NAD(P)H dehydrogenase, subunit 2 B</fullName>
    </alternativeName>
    <alternativeName>
        <fullName evidence="1">NADH-plastoquinone oxidoreductase subunit 2 B</fullName>
    </alternativeName>
</protein>
<name>NU2C2_CHLSC</name>
<accession>P0CC45</accession>
<accession>A6MMG7</accession>
<sequence>MIWHVQNENFILDSTRIFMKAFHLLLFHGSFIFPECILIFGLILLLMIDSTSDQKDIPWLYFISSTSLVMSITALLFRWREEPMISFSGNFQTNNFNEIFQFLILLCSTLCIPLSVEYIECTEMAITEFLLFVLTATLGGMFLCGANDSITIFVAPECFSLCSYLLSGYTKRDVRSNEATTKYLLMGGASSSILVHGFSWLYGSSGGEIELQEIVNGLINTQMYNSPGISIALISITVGIGFKLSPAPSHQWTPDVYEGSPTPVVAFLSVTSKVAASASATRIFDIPFYFSSNEWHLLLEILAILSMILGNLIAITQTSMKRMLAYSSIGQIGYVIIGIIVGDSNDGYASMITYMLFYISMNLGTFARIVSFGLRTGTDNIRDYAGLYTKDPFLALSSALCLLSLGGLPPLAGFFGKLHLFWCGWQAGLYFLVSIGLLTSVVSIYYYLKIIKLLMTGRNQEITPHVRNYRRSPLRSNNSIELSMIVCVIASTIPGISMNPIIAIAQDTLF</sequence>
<organism>
    <name type="scientific">Chloranthus spicatus</name>
    <name type="common">Chulantree</name>
    <name type="synonym">Nigrina spicata</name>
    <dbReference type="NCBI Taxonomy" id="13006"/>
    <lineage>
        <taxon>Eukaryota</taxon>
        <taxon>Viridiplantae</taxon>
        <taxon>Streptophyta</taxon>
        <taxon>Embryophyta</taxon>
        <taxon>Tracheophyta</taxon>
        <taxon>Spermatophyta</taxon>
        <taxon>Magnoliopsida</taxon>
        <taxon>Chloranthales</taxon>
        <taxon>Chloranthaceae</taxon>
        <taxon>Chloranthus</taxon>
    </lineage>
</organism>
<dbReference type="EC" id="7.1.1.-" evidence="1"/>
<dbReference type="EMBL" id="EF380352">
    <property type="protein sequence ID" value="ABQ43320.1"/>
    <property type="molecule type" value="Genomic_DNA"/>
</dbReference>
<dbReference type="SMR" id="P0CC45"/>
<dbReference type="GO" id="GO:0009535">
    <property type="term" value="C:chloroplast thylakoid membrane"/>
    <property type="evidence" value="ECO:0007669"/>
    <property type="project" value="UniProtKB-SubCell"/>
</dbReference>
<dbReference type="GO" id="GO:0008137">
    <property type="term" value="F:NADH dehydrogenase (ubiquinone) activity"/>
    <property type="evidence" value="ECO:0007669"/>
    <property type="project" value="InterPro"/>
</dbReference>
<dbReference type="GO" id="GO:0048038">
    <property type="term" value="F:quinone binding"/>
    <property type="evidence" value="ECO:0007669"/>
    <property type="project" value="UniProtKB-KW"/>
</dbReference>
<dbReference type="GO" id="GO:0042773">
    <property type="term" value="P:ATP synthesis coupled electron transport"/>
    <property type="evidence" value="ECO:0007669"/>
    <property type="project" value="InterPro"/>
</dbReference>
<dbReference type="GO" id="GO:0019684">
    <property type="term" value="P:photosynthesis, light reaction"/>
    <property type="evidence" value="ECO:0007669"/>
    <property type="project" value="UniProtKB-UniRule"/>
</dbReference>
<dbReference type="HAMAP" id="MF_00445">
    <property type="entry name" value="NDH1_NuoN_1"/>
    <property type="match status" value="1"/>
</dbReference>
<dbReference type="InterPro" id="IPR010096">
    <property type="entry name" value="NADH-Q_OxRdtase_suN/2"/>
</dbReference>
<dbReference type="InterPro" id="IPR001750">
    <property type="entry name" value="ND/Mrp_TM"/>
</dbReference>
<dbReference type="InterPro" id="IPR045693">
    <property type="entry name" value="Ndh2_N"/>
</dbReference>
<dbReference type="NCBIfam" id="TIGR01770">
    <property type="entry name" value="NDH_I_N"/>
    <property type="match status" value="1"/>
</dbReference>
<dbReference type="NCBIfam" id="NF002701">
    <property type="entry name" value="PRK02504.1"/>
    <property type="match status" value="1"/>
</dbReference>
<dbReference type="PANTHER" id="PTHR22773">
    <property type="entry name" value="NADH DEHYDROGENASE"/>
    <property type="match status" value="1"/>
</dbReference>
<dbReference type="Pfam" id="PF19530">
    <property type="entry name" value="Ndh2_N"/>
    <property type="match status" value="1"/>
</dbReference>
<dbReference type="Pfam" id="PF00361">
    <property type="entry name" value="Proton_antipo_M"/>
    <property type="match status" value="1"/>
</dbReference>
<dbReference type="PRINTS" id="PR01434">
    <property type="entry name" value="NADHDHGNASE5"/>
</dbReference>
<comment type="function">
    <text evidence="1">NDH shuttles electrons from NAD(P)H:plastoquinone, via FMN and iron-sulfur (Fe-S) centers, to quinones in the photosynthetic chain and possibly in a chloroplast respiratory chain. The immediate electron acceptor for the enzyme in this species is believed to be plastoquinone. Couples the redox reaction to proton translocation, and thus conserves the redox energy in a proton gradient.</text>
</comment>
<comment type="catalytic activity">
    <reaction evidence="1">
        <text>a plastoquinone + NADH + (n+1) H(+)(in) = a plastoquinol + NAD(+) + n H(+)(out)</text>
        <dbReference type="Rhea" id="RHEA:42608"/>
        <dbReference type="Rhea" id="RHEA-COMP:9561"/>
        <dbReference type="Rhea" id="RHEA-COMP:9562"/>
        <dbReference type="ChEBI" id="CHEBI:15378"/>
        <dbReference type="ChEBI" id="CHEBI:17757"/>
        <dbReference type="ChEBI" id="CHEBI:57540"/>
        <dbReference type="ChEBI" id="CHEBI:57945"/>
        <dbReference type="ChEBI" id="CHEBI:62192"/>
    </reaction>
</comment>
<comment type="catalytic activity">
    <reaction evidence="1">
        <text>a plastoquinone + NADPH + (n+1) H(+)(in) = a plastoquinol + NADP(+) + n H(+)(out)</text>
        <dbReference type="Rhea" id="RHEA:42612"/>
        <dbReference type="Rhea" id="RHEA-COMP:9561"/>
        <dbReference type="Rhea" id="RHEA-COMP:9562"/>
        <dbReference type="ChEBI" id="CHEBI:15378"/>
        <dbReference type="ChEBI" id="CHEBI:17757"/>
        <dbReference type="ChEBI" id="CHEBI:57783"/>
        <dbReference type="ChEBI" id="CHEBI:58349"/>
        <dbReference type="ChEBI" id="CHEBI:62192"/>
    </reaction>
</comment>
<comment type="subunit">
    <text evidence="1">NDH is composed of at least 16 different subunits, 5 of which are encoded in the nucleus.</text>
</comment>
<comment type="subcellular location">
    <subcellularLocation>
        <location evidence="1">Plastid</location>
        <location evidence="1">Chloroplast thylakoid membrane</location>
        <topology evidence="1">Multi-pass membrane protein</topology>
    </subcellularLocation>
</comment>
<comment type="similarity">
    <text evidence="1">Belongs to the complex I subunit 2 family.</text>
</comment>
<proteinExistence type="inferred from homology"/>
<geneLocation type="chloroplast"/>
<keyword id="KW-0150">Chloroplast</keyword>
<keyword id="KW-0472">Membrane</keyword>
<keyword id="KW-0520">NAD</keyword>
<keyword id="KW-0521">NADP</keyword>
<keyword id="KW-0934">Plastid</keyword>
<keyword id="KW-0618">Plastoquinone</keyword>
<keyword id="KW-0874">Quinone</keyword>
<keyword id="KW-0793">Thylakoid</keyword>
<keyword id="KW-1278">Translocase</keyword>
<keyword id="KW-0812">Transmembrane</keyword>
<keyword id="KW-1133">Transmembrane helix</keyword>
<keyword id="KW-0813">Transport</keyword>
<feature type="chain" id="PRO_0000391260" description="NAD(P)H-quinone oxidoreductase subunit 2 B, chloroplastic">
    <location>
        <begin position="1"/>
        <end position="510"/>
    </location>
</feature>
<feature type="transmembrane region" description="Helical" evidence="1">
    <location>
        <begin position="24"/>
        <end position="44"/>
    </location>
</feature>
<feature type="transmembrane region" description="Helical" evidence="1">
    <location>
        <begin position="57"/>
        <end position="77"/>
    </location>
</feature>
<feature type="transmembrane region" description="Helical" evidence="1">
    <location>
        <begin position="99"/>
        <end position="119"/>
    </location>
</feature>
<feature type="transmembrane region" description="Helical" evidence="1">
    <location>
        <begin position="124"/>
        <end position="144"/>
    </location>
</feature>
<feature type="transmembrane region" description="Helical" evidence="1">
    <location>
        <begin position="150"/>
        <end position="170"/>
    </location>
</feature>
<feature type="transmembrane region" description="Helical" evidence="1">
    <location>
        <begin position="183"/>
        <end position="203"/>
    </location>
</feature>
<feature type="transmembrane region" description="Helical" evidence="1">
    <location>
        <begin position="227"/>
        <end position="247"/>
    </location>
</feature>
<feature type="transmembrane region" description="Helical" evidence="1">
    <location>
        <begin position="295"/>
        <end position="315"/>
    </location>
</feature>
<feature type="transmembrane region" description="Helical" evidence="1">
    <location>
        <begin position="323"/>
        <end position="343"/>
    </location>
</feature>
<feature type="transmembrane region" description="Helical" evidence="1">
    <location>
        <begin position="347"/>
        <end position="367"/>
    </location>
</feature>
<feature type="transmembrane region" description="Helical" evidence="1">
    <location>
        <begin position="395"/>
        <end position="415"/>
    </location>
</feature>
<feature type="transmembrane region" description="Helical" evidence="1">
    <location>
        <begin position="418"/>
        <end position="438"/>
    </location>
</feature>
<feature type="transmembrane region" description="Helical" evidence="1">
    <location>
        <begin position="484"/>
        <end position="504"/>
    </location>
</feature>
<reference key="1">
    <citation type="journal article" date="2007" name="Mol. Phylogenet. Evol.">
        <title>Phylogenetic and evolutionary implications of complete chloroplast genome sequences of four early-diverging angiosperms: Buxus (Buxaceae), Chloranthus (Chloranthaceae), Dioscorea (Dioscoreaceae), and Illicium (Schisandraceae).</title>
        <authorList>
            <person name="Hansen D.R."/>
            <person name="Dastidar S.G."/>
            <person name="Cai Z."/>
            <person name="Penaflor C."/>
            <person name="Kuehl J.V."/>
            <person name="Boore J.L."/>
            <person name="Jansen R.K."/>
        </authorList>
    </citation>
    <scope>NUCLEOTIDE SEQUENCE [LARGE SCALE GENOMIC DNA]</scope>
</reference>
<evidence type="ECO:0000255" key="1">
    <source>
        <dbReference type="HAMAP-Rule" id="MF_00445"/>
    </source>
</evidence>